<keyword id="KW-0963">Cytoplasm</keyword>
<keyword id="KW-0238">DNA-binding</keyword>
<keyword id="KW-0731">Sigma factor</keyword>
<keyword id="KW-0346">Stress response</keyword>
<keyword id="KW-0804">Transcription</keyword>
<keyword id="KW-0805">Transcription regulation</keyword>
<name>RPOH_VIBVU</name>
<protein>
    <recommendedName>
        <fullName evidence="1">RNA polymerase sigma factor RpoH</fullName>
    </recommendedName>
    <alternativeName>
        <fullName evidence="1">RNA polymerase sigma-32 factor</fullName>
    </alternativeName>
</protein>
<evidence type="ECO:0000255" key="1">
    <source>
        <dbReference type="HAMAP-Rule" id="MF_00961"/>
    </source>
</evidence>
<dbReference type="EMBL" id="AE016795">
    <property type="protein sequence ID" value="AAO09630.1"/>
    <property type="molecule type" value="Genomic_DNA"/>
</dbReference>
<dbReference type="RefSeq" id="WP_011079169.1">
    <property type="nucleotide sequence ID" value="NC_004459.3"/>
</dbReference>
<dbReference type="SMR" id="Q8DD54"/>
<dbReference type="KEGG" id="vvu:VV1_1158"/>
<dbReference type="HOGENOM" id="CLU_014793_3_5_6"/>
<dbReference type="Proteomes" id="UP000002275">
    <property type="component" value="Chromosome 1"/>
</dbReference>
<dbReference type="GO" id="GO:0005737">
    <property type="term" value="C:cytoplasm"/>
    <property type="evidence" value="ECO:0007669"/>
    <property type="project" value="UniProtKB-SubCell"/>
</dbReference>
<dbReference type="GO" id="GO:0003677">
    <property type="term" value="F:DNA binding"/>
    <property type="evidence" value="ECO:0007669"/>
    <property type="project" value="UniProtKB-UniRule"/>
</dbReference>
<dbReference type="GO" id="GO:0016987">
    <property type="term" value="F:sigma factor activity"/>
    <property type="evidence" value="ECO:0007669"/>
    <property type="project" value="UniProtKB-UniRule"/>
</dbReference>
<dbReference type="GO" id="GO:0006352">
    <property type="term" value="P:DNA-templated transcription initiation"/>
    <property type="evidence" value="ECO:0007669"/>
    <property type="project" value="UniProtKB-UniRule"/>
</dbReference>
<dbReference type="GO" id="GO:0009408">
    <property type="term" value="P:response to heat"/>
    <property type="evidence" value="ECO:0007669"/>
    <property type="project" value="UniProtKB-UniRule"/>
</dbReference>
<dbReference type="CDD" id="cd06171">
    <property type="entry name" value="Sigma70_r4"/>
    <property type="match status" value="1"/>
</dbReference>
<dbReference type="FunFam" id="1.10.10.10:FF:000285">
    <property type="entry name" value="RNA polymerase sigma factor RpoH"/>
    <property type="match status" value="1"/>
</dbReference>
<dbReference type="FunFam" id="1.20.120.1810:FF:000001">
    <property type="entry name" value="RNA polymerase sigma factor RpoH"/>
    <property type="match status" value="1"/>
</dbReference>
<dbReference type="Gene3D" id="1.20.120.1810">
    <property type="match status" value="1"/>
</dbReference>
<dbReference type="Gene3D" id="1.20.140.160">
    <property type="match status" value="1"/>
</dbReference>
<dbReference type="HAMAP" id="MF_00961">
    <property type="entry name" value="Sigma70_RpoH"/>
    <property type="match status" value="1"/>
</dbReference>
<dbReference type="InterPro" id="IPR014284">
    <property type="entry name" value="RNA_pol_sigma-70_dom"/>
</dbReference>
<dbReference type="InterPro" id="IPR000943">
    <property type="entry name" value="RNA_pol_sigma70"/>
</dbReference>
<dbReference type="InterPro" id="IPR009042">
    <property type="entry name" value="RNA_pol_sigma70_r1_2"/>
</dbReference>
<dbReference type="InterPro" id="IPR007627">
    <property type="entry name" value="RNA_pol_sigma70_r2"/>
</dbReference>
<dbReference type="InterPro" id="IPR007630">
    <property type="entry name" value="RNA_pol_sigma70_r4"/>
</dbReference>
<dbReference type="InterPro" id="IPR013325">
    <property type="entry name" value="RNA_pol_sigma_r2"/>
</dbReference>
<dbReference type="InterPro" id="IPR013324">
    <property type="entry name" value="RNA_pol_sigma_r3/r4-like"/>
</dbReference>
<dbReference type="InterPro" id="IPR012759">
    <property type="entry name" value="RNA_pol_sigma_RpoH_proteobac"/>
</dbReference>
<dbReference type="InterPro" id="IPR050813">
    <property type="entry name" value="Sigma-70_Factor"/>
</dbReference>
<dbReference type="NCBIfam" id="NF005143">
    <property type="entry name" value="PRK06596.1"/>
    <property type="match status" value="1"/>
</dbReference>
<dbReference type="NCBIfam" id="TIGR02392">
    <property type="entry name" value="rpoH_proteo"/>
    <property type="match status" value="1"/>
</dbReference>
<dbReference type="NCBIfam" id="TIGR02937">
    <property type="entry name" value="sigma70-ECF"/>
    <property type="match status" value="1"/>
</dbReference>
<dbReference type="PANTHER" id="PTHR30376:SF3">
    <property type="entry name" value="RNA POLYMERASE SIGMA FACTOR RPOH"/>
    <property type="match status" value="1"/>
</dbReference>
<dbReference type="PANTHER" id="PTHR30376">
    <property type="entry name" value="SIGMA FACTOR RPOH HEAT SHOCK RELATED"/>
    <property type="match status" value="1"/>
</dbReference>
<dbReference type="Pfam" id="PF00140">
    <property type="entry name" value="Sigma70_r1_2"/>
    <property type="match status" value="1"/>
</dbReference>
<dbReference type="Pfam" id="PF04542">
    <property type="entry name" value="Sigma70_r2"/>
    <property type="match status" value="1"/>
</dbReference>
<dbReference type="Pfam" id="PF04545">
    <property type="entry name" value="Sigma70_r4"/>
    <property type="match status" value="1"/>
</dbReference>
<dbReference type="PRINTS" id="PR00046">
    <property type="entry name" value="SIGMA70FCT"/>
</dbReference>
<dbReference type="SUPFAM" id="SSF88946">
    <property type="entry name" value="Sigma2 domain of RNA polymerase sigma factors"/>
    <property type="match status" value="1"/>
</dbReference>
<dbReference type="SUPFAM" id="SSF88659">
    <property type="entry name" value="Sigma3 and sigma4 domains of RNA polymerase sigma factors"/>
    <property type="match status" value="1"/>
</dbReference>
<dbReference type="PROSITE" id="PS00715">
    <property type="entry name" value="SIGMA70_1"/>
    <property type="match status" value="1"/>
</dbReference>
<dbReference type="PROSITE" id="PS00716">
    <property type="entry name" value="SIGMA70_2"/>
    <property type="match status" value="1"/>
</dbReference>
<proteinExistence type="inferred from homology"/>
<gene>
    <name evidence="1" type="primary">rpoH</name>
    <name type="ordered locus">VV1_1158</name>
</gene>
<reference key="1">
    <citation type="submission" date="2002-12" db="EMBL/GenBank/DDBJ databases">
        <title>Complete genome sequence of Vibrio vulnificus CMCP6.</title>
        <authorList>
            <person name="Rhee J.H."/>
            <person name="Kim S.Y."/>
            <person name="Chung S.S."/>
            <person name="Kim J.J."/>
            <person name="Moon Y.H."/>
            <person name="Jeong H."/>
            <person name="Choy H.E."/>
        </authorList>
    </citation>
    <scope>NUCLEOTIDE SEQUENCE [LARGE SCALE GENOMIC DNA]</scope>
    <source>
        <strain>CMCP6</strain>
    </source>
</reference>
<organism>
    <name type="scientific">Vibrio vulnificus (strain CMCP6)</name>
    <dbReference type="NCBI Taxonomy" id="216895"/>
    <lineage>
        <taxon>Bacteria</taxon>
        <taxon>Pseudomonadati</taxon>
        <taxon>Pseudomonadota</taxon>
        <taxon>Gammaproteobacteria</taxon>
        <taxon>Vibrionales</taxon>
        <taxon>Vibrionaceae</taxon>
        <taxon>Vibrio</taxon>
    </lineage>
</organism>
<sequence>MTTQAYPMALVTQDSLDGYIRSVNSYPMLTADEERDLAERLHYKGEIEAAKGLILSHLRFVVHVARGYSGYGLPMADLVQEGNIGLMKAVKRFNPEVGVRLVSFAVHWIKAEIHEYVLRNWRIVKIATTKAQRKLFFNLRKSKKRLGWFNNGEVETVARELGVEPAEVREMESRLAAVDSTFDLPNEEDDSSSVSTAPVLYLEDKSSDVADNLEAQNWEAHTNNRLAMALASLDERSQHIVRSRWLDDDKATLQDLAEMYGVSAERIRQLEKNAMKKLKMAVGEI</sequence>
<comment type="function">
    <text evidence="1">Sigma factors are initiation factors that promote the attachment of RNA polymerase to specific initiation sites and are then released. This sigma factor is involved in regulation of expression of heat shock genes.</text>
</comment>
<comment type="subunit">
    <text evidence="1">Interacts with the RNA polymerase core enzyme.</text>
</comment>
<comment type="subcellular location">
    <subcellularLocation>
        <location evidence="1">Cytoplasm</location>
    </subcellularLocation>
</comment>
<comment type="similarity">
    <text evidence="1">Belongs to the sigma-70 factor family. RpoH subfamily.</text>
</comment>
<feature type="chain" id="PRO_0000093965" description="RNA polymerase sigma factor RpoH">
    <location>
        <begin position="1"/>
        <end position="285"/>
    </location>
</feature>
<feature type="DNA-binding region" description="H-T-H motif" evidence="1">
    <location>
        <begin position="253"/>
        <end position="272"/>
    </location>
</feature>
<feature type="region of interest" description="Sigma-70 factor domain-2" evidence="1">
    <location>
        <begin position="53"/>
        <end position="122"/>
    </location>
</feature>
<feature type="region of interest" description="Sigma-70 factor domain-4" evidence="1">
    <location>
        <begin position="229"/>
        <end position="280"/>
    </location>
</feature>
<feature type="short sequence motif" description="Interaction with polymerase core subunit RpoC">
    <location>
        <begin position="77"/>
        <end position="80"/>
    </location>
</feature>
<accession>Q8DD54</accession>